<protein>
    <recommendedName>
        <fullName evidence="1">GMP reductase</fullName>
        <ecNumber evidence="1">1.7.1.7</ecNumber>
    </recommendedName>
    <alternativeName>
        <fullName evidence="1">Guanosine 5'-monophosphate oxidoreductase</fullName>
        <shortName evidence="1">Guanosine monophosphate reductase</shortName>
    </alternativeName>
</protein>
<comment type="function">
    <text evidence="1">Catalyzes the irreversible NADPH-dependent deamination of GMP to IMP. It functions in the conversion of nucleobase, nucleoside and nucleotide derivatives of G to A nucleotides, and in maintaining the intracellular balance of A and G nucleotides.</text>
</comment>
<comment type="catalytic activity">
    <reaction evidence="1">
        <text>IMP + NH4(+) + NADP(+) = GMP + NADPH + 2 H(+)</text>
        <dbReference type="Rhea" id="RHEA:17185"/>
        <dbReference type="ChEBI" id="CHEBI:15378"/>
        <dbReference type="ChEBI" id="CHEBI:28938"/>
        <dbReference type="ChEBI" id="CHEBI:57783"/>
        <dbReference type="ChEBI" id="CHEBI:58053"/>
        <dbReference type="ChEBI" id="CHEBI:58115"/>
        <dbReference type="ChEBI" id="CHEBI:58349"/>
        <dbReference type="EC" id="1.7.1.7"/>
    </reaction>
</comment>
<comment type="subunit">
    <text evidence="1">Homotetramer.</text>
</comment>
<comment type="similarity">
    <text evidence="1">Belongs to the IMPDH/GMPR family. GuaC type 1 subfamily.</text>
</comment>
<sequence length="347" mass="37492">MRIEEGLKLGFKDVLIRPKRSTLKSRSEVALERQFTFKHSGWNWSGVPIIAANMDTVGTFRMAEVLASFDILTAVHKHYTLEQWAEFVKRSPESVLRHVMVSTGTSSADFDKMKQILALSPSLKFICIDVANGYSEHFVSFLQRAREACPDKVICAGNVVTGEMVEELILSGADIVKVGIGPGSVCTTRVKTGVGYPQLSAVIECADAAHGLGGQIVSDGGCSVPGDVAKAFGGGADFVMLGGMLAGHDECEGRVVEENGEKFMLFYGMSSESAMKRHVGGVAQYRAAEGKTVKLPLRGSVDNTVRDIMGGLRSACTYVGASHLKELTKRTTFIRVAEQENRVFGTD</sequence>
<name>GUAC_YERPP</name>
<accession>A4TPS6</accession>
<gene>
    <name evidence="1" type="primary">guaC</name>
    <name type="ordered locus">YPDSF_2926</name>
</gene>
<keyword id="KW-0479">Metal-binding</keyword>
<keyword id="KW-0521">NADP</keyword>
<keyword id="KW-0560">Oxidoreductase</keyword>
<keyword id="KW-0630">Potassium</keyword>
<feature type="chain" id="PRO_1000025627" description="GMP reductase">
    <location>
        <begin position="1"/>
        <end position="347"/>
    </location>
</feature>
<feature type="active site" description="Thioimidate intermediate" evidence="1">
    <location>
        <position position="186"/>
    </location>
</feature>
<feature type="binding site" evidence="1">
    <location>
        <begin position="108"/>
        <end position="131"/>
    </location>
    <ligand>
        <name>NADP(+)</name>
        <dbReference type="ChEBI" id="CHEBI:58349"/>
    </ligand>
</feature>
<feature type="binding site" evidence="1">
    <location>
        <position position="181"/>
    </location>
    <ligand>
        <name>K(+)</name>
        <dbReference type="ChEBI" id="CHEBI:29103"/>
    </ligand>
</feature>
<feature type="binding site" evidence="1">
    <location>
        <position position="183"/>
    </location>
    <ligand>
        <name>K(+)</name>
        <dbReference type="ChEBI" id="CHEBI:29103"/>
    </ligand>
</feature>
<feature type="binding site" evidence="1">
    <location>
        <begin position="216"/>
        <end position="239"/>
    </location>
    <ligand>
        <name>NADP(+)</name>
        <dbReference type="ChEBI" id="CHEBI:58349"/>
    </ligand>
</feature>
<dbReference type="EC" id="1.7.1.7" evidence="1"/>
<dbReference type="EMBL" id="CP000668">
    <property type="protein sequence ID" value="ABP41288.1"/>
    <property type="molecule type" value="Genomic_DNA"/>
</dbReference>
<dbReference type="RefSeq" id="WP_002209320.1">
    <property type="nucleotide sequence ID" value="NZ_CP009715.1"/>
</dbReference>
<dbReference type="SMR" id="A4TPS6"/>
<dbReference type="KEGG" id="ypp:YPDSF_2926"/>
<dbReference type="PATRIC" id="fig|386656.14.peg.1441"/>
<dbReference type="GO" id="GO:0005829">
    <property type="term" value="C:cytosol"/>
    <property type="evidence" value="ECO:0007669"/>
    <property type="project" value="TreeGrafter"/>
</dbReference>
<dbReference type="GO" id="GO:1902560">
    <property type="term" value="C:GMP reductase complex"/>
    <property type="evidence" value="ECO:0007669"/>
    <property type="project" value="InterPro"/>
</dbReference>
<dbReference type="GO" id="GO:0003920">
    <property type="term" value="F:GMP reductase activity"/>
    <property type="evidence" value="ECO:0007669"/>
    <property type="project" value="UniProtKB-UniRule"/>
</dbReference>
<dbReference type="GO" id="GO:0046872">
    <property type="term" value="F:metal ion binding"/>
    <property type="evidence" value="ECO:0007669"/>
    <property type="project" value="UniProtKB-KW"/>
</dbReference>
<dbReference type="GO" id="GO:0006163">
    <property type="term" value="P:purine nucleotide metabolic process"/>
    <property type="evidence" value="ECO:0007669"/>
    <property type="project" value="UniProtKB-UniRule"/>
</dbReference>
<dbReference type="CDD" id="cd00381">
    <property type="entry name" value="IMPDH"/>
    <property type="match status" value="1"/>
</dbReference>
<dbReference type="FunFam" id="3.20.20.70:FF:000012">
    <property type="entry name" value="GMP reductase"/>
    <property type="match status" value="1"/>
</dbReference>
<dbReference type="Gene3D" id="3.20.20.70">
    <property type="entry name" value="Aldolase class I"/>
    <property type="match status" value="1"/>
</dbReference>
<dbReference type="HAMAP" id="MF_00596">
    <property type="entry name" value="GMP_reduct_type1"/>
    <property type="match status" value="1"/>
</dbReference>
<dbReference type="InterPro" id="IPR013785">
    <property type="entry name" value="Aldolase_TIM"/>
</dbReference>
<dbReference type="InterPro" id="IPR050139">
    <property type="entry name" value="GMP_reductase"/>
</dbReference>
<dbReference type="InterPro" id="IPR005993">
    <property type="entry name" value="GMPR"/>
</dbReference>
<dbReference type="InterPro" id="IPR015875">
    <property type="entry name" value="IMP_DH/GMP_Rdtase_CS"/>
</dbReference>
<dbReference type="InterPro" id="IPR001093">
    <property type="entry name" value="IMP_DH_GMPRt"/>
</dbReference>
<dbReference type="NCBIfam" id="TIGR01305">
    <property type="entry name" value="GMP_reduct_1"/>
    <property type="match status" value="1"/>
</dbReference>
<dbReference type="NCBIfam" id="NF003470">
    <property type="entry name" value="PRK05096.1"/>
    <property type="match status" value="1"/>
</dbReference>
<dbReference type="PANTHER" id="PTHR43170">
    <property type="entry name" value="GMP REDUCTASE"/>
    <property type="match status" value="1"/>
</dbReference>
<dbReference type="PANTHER" id="PTHR43170:SF5">
    <property type="entry name" value="GMP REDUCTASE"/>
    <property type="match status" value="1"/>
</dbReference>
<dbReference type="Pfam" id="PF00478">
    <property type="entry name" value="IMPDH"/>
    <property type="match status" value="1"/>
</dbReference>
<dbReference type="PIRSF" id="PIRSF000235">
    <property type="entry name" value="GMP_reductase"/>
    <property type="match status" value="1"/>
</dbReference>
<dbReference type="SMART" id="SM01240">
    <property type="entry name" value="IMPDH"/>
    <property type="match status" value="1"/>
</dbReference>
<dbReference type="SUPFAM" id="SSF51412">
    <property type="entry name" value="Inosine monophosphate dehydrogenase (IMPDH)"/>
    <property type="match status" value="1"/>
</dbReference>
<dbReference type="PROSITE" id="PS00487">
    <property type="entry name" value="IMP_DH_GMP_RED"/>
    <property type="match status" value="1"/>
</dbReference>
<proteinExistence type="inferred from homology"/>
<organism>
    <name type="scientific">Yersinia pestis (strain Pestoides F)</name>
    <dbReference type="NCBI Taxonomy" id="386656"/>
    <lineage>
        <taxon>Bacteria</taxon>
        <taxon>Pseudomonadati</taxon>
        <taxon>Pseudomonadota</taxon>
        <taxon>Gammaproteobacteria</taxon>
        <taxon>Enterobacterales</taxon>
        <taxon>Yersiniaceae</taxon>
        <taxon>Yersinia</taxon>
    </lineage>
</organism>
<reference key="1">
    <citation type="submission" date="2007-02" db="EMBL/GenBank/DDBJ databases">
        <title>Complete sequence of chromosome of Yersinia pestis Pestoides F.</title>
        <authorList>
            <consortium name="US DOE Joint Genome Institute"/>
            <person name="Copeland A."/>
            <person name="Lucas S."/>
            <person name="Lapidus A."/>
            <person name="Barry K."/>
            <person name="Detter J.C."/>
            <person name="Glavina del Rio T."/>
            <person name="Hammon N."/>
            <person name="Israni S."/>
            <person name="Dalin E."/>
            <person name="Tice H."/>
            <person name="Pitluck S."/>
            <person name="Di Bartolo G."/>
            <person name="Chain P."/>
            <person name="Malfatti S."/>
            <person name="Shin M."/>
            <person name="Vergez L."/>
            <person name="Schmutz J."/>
            <person name="Larimer F."/>
            <person name="Land M."/>
            <person name="Hauser L."/>
            <person name="Worsham P."/>
            <person name="Chu M."/>
            <person name="Bearden S."/>
            <person name="Garcia E."/>
            <person name="Richardson P."/>
        </authorList>
    </citation>
    <scope>NUCLEOTIDE SEQUENCE [LARGE SCALE GENOMIC DNA]</scope>
    <source>
        <strain>Pestoides F</strain>
    </source>
</reference>
<evidence type="ECO:0000255" key="1">
    <source>
        <dbReference type="HAMAP-Rule" id="MF_00596"/>
    </source>
</evidence>